<organism>
    <name type="scientific">Bos taurus</name>
    <name type="common">Bovine</name>
    <dbReference type="NCBI Taxonomy" id="9913"/>
    <lineage>
        <taxon>Eukaryota</taxon>
        <taxon>Metazoa</taxon>
        <taxon>Chordata</taxon>
        <taxon>Craniata</taxon>
        <taxon>Vertebrata</taxon>
        <taxon>Euteleostomi</taxon>
        <taxon>Mammalia</taxon>
        <taxon>Eutheria</taxon>
        <taxon>Laurasiatheria</taxon>
        <taxon>Artiodactyla</taxon>
        <taxon>Ruminantia</taxon>
        <taxon>Pecora</taxon>
        <taxon>Bovidae</taxon>
        <taxon>Bovinae</taxon>
        <taxon>Bos</taxon>
    </lineage>
</organism>
<accession>Q2KII6</accession>
<feature type="initiator methionine" description="Removed" evidence="2">
    <location>
        <position position="1"/>
    </location>
</feature>
<feature type="chain" id="PRO_0000269246" description="Neuroguidin">
    <location>
        <begin position="2"/>
        <end position="315"/>
    </location>
</feature>
<feature type="region of interest" description="Necessary for interaction with EIF4E" evidence="1">
    <location>
        <begin position="41"/>
        <end position="174"/>
    </location>
</feature>
<feature type="region of interest" description="Disordered" evidence="5">
    <location>
        <begin position="123"/>
        <end position="174"/>
    </location>
</feature>
<feature type="region of interest" description="Disordered" evidence="5">
    <location>
        <begin position="252"/>
        <end position="315"/>
    </location>
</feature>
<feature type="coiled-coil region" evidence="4">
    <location>
        <begin position="5"/>
        <end position="42"/>
    </location>
</feature>
<feature type="coiled-coil region" evidence="4">
    <location>
        <begin position="181"/>
        <end position="205"/>
    </location>
</feature>
<feature type="compositionally biased region" description="Acidic residues" evidence="5">
    <location>
        <begin position="144"/>
        <end position="153"/>
    </location>
</feature>
<feature type="compositionally biased region" description="Polar residues" evidence="5">
    <location>
        <begin position="264"/>
        <end position="276"/>
    </location>
</feature>
<feature type="compositionally biased region" description="Basic residues" evidence="5">
    <location>
        <begin position="295"/>
        <end position="315"/>
    </location>
</feature>
<feature type="modified residue" description="N-acetylalanine" evidence="2">
    <location>
        <position position="2"/>
    </location>
</feature>
<feature type="modified residue" description="Phosphoserine" evidence="2">
    <location>
        <position position="121"/>
    </location>
</feature>
<feature type="modified residue" description="Phosphoserine" evidence="2">
    <location>
        <position position="142"/>
    </location>
</feature>
<feature type="modified residue" description="Phosphoserine" evidence="2">
    <location>
        <position position="143"/>
    </location>
</feature>
<feature type="modified residue" description="Phosphoserine" evidence="2">
    <location>
        <position position="204"/>
    </location>
</feature>
<feature type="modified residue" description="Phosphoserine" evidence="2">
    <location>
        <position position="214"/>
    </location>
</feature>
<name>NGDN_BOVIN</name>
<evidence type="ECO:0000250" key="1"/>
<evidence type="ECO:0000250" key="2">
    <source>
        <dbReference type="UniProtKB" id="Q8NEJ9"/>
    </source>
</evidence>
<evidence type="ECO:0000250" key="3">
    <source>
        <dbReference type="UniProtKB" id="Q9DB96"/>
    </source>
</evidence>
<evidence type="ECO:0000255" key="4"/>
<evidence type="ECO:0000256" key="5">
    <source>
        <dbReference type="SAM" id="MobiDB-lite"/>
    </source>
</evidence>
<evidence type="ECO:0000305" key="6"/>
<reference key="1">
    <citation type="submission" date="2006-01" db="EMBL/GenBank/DDBJ databases">
        <authorList>
            <consortium name="NIH - Mammalian Gene Collection (MGC) project"/>
        </authorList>
    </citation>
    <scope>NUCLEOTIDE SEQUENCE [LARGE SCALE MRNA]</scope>
    <source>
        <strain>Hereford</strain>
        <tissue>Testis</tissue>
    </source>
</reference>
<dbReference type="EMBL" id="BC112624">
    <property type="protein sequence ID" value="AAI12625.1"/>
    <property type="molecule type" value="mRNA"/>
</dbReference>
<dbReference type="RefSeq" id="NP_001039924.1">
    <property type="nucleotide sequence ID" value="NM_001046459.1"/>
</dbReference>
<dbReference type="SMR" id="Q2KII6"/>
<dbReference type="FunCoup" id="Q2KII6">
    <property type="interactions" value="4828"/>
</dbReference>
<dbReference type="STRING" id="9913.ENSBTAP00000012628"/>
<dbReference type="PaxDb" id="9913-ENSBTAP00000012628"/>
<dbReference type="Ensembl" id="ENSBTAT00000012628.5">
    <property type="protein sequence ID" value="ENSBTAP00000012628.3"/>
    <property type="gene ID" value="ENSBTAG00000009595.5"/>
</dbReference>
<dbReference type="GeneID" id="539602"/>
<dbReference type="KEGG" id="bta:539602"/>
<dbReference type="CTD" id="25983"/>
<dbReference type="VEuPathDB" id="HostDB:ENSBTAG00000009595"/>
<dbReference type="VGNC" id="VGNC:32059">
    <property type="gene designation" value="NGDN"/>
</dbReference>
<dbReference type="eggNOG" id="KOG3117">
    <property type="taxonomic scope" value="Eukaryota"/>
</dbReference>
<dbReference type="GeneTree" id="ENSGT00500000044922"/>
<dbReference type="HOGENOM" id="CLU_031901_0_0_1"/>
<dbReference type="InParanoid" id="Q2KII6"/>
<dbReference type="OMA" id="PVHYNET"/>
<dbReference type="OrthoDB" id="203440at2759"/>
<dbReference type="TreeFam" id="TF313713"/>
<dbReference type="CD-CODE" id="D7FE2080">
    <property type="entry name" value="Nucleolus"/>
</dbReference>
<dbReference type="Proteomes" id="UP000009136">
    <property type="component" value="Chromosome 10"/>
</dbReference>
<dbReference type="Bgee" id="ENSBTAG00000009595">
    <property type="expression patterns" value="Expressed in oocyte and 104 other cell types or tissues"/>
</dbReference>
<dbReference type="GO" id="GO:0030424">
    <property type="term" value="C:axon"/>
    <property type="evidence" value="ECO:0007669"/>
    <property type="project" value="UniProtKB-SubCell"/>
</dbReference>
<dbReference type="GO" id="GO:0000775">
    <property type="term" value="C:chromosome, centromeric region"/>
    <property type="evidence" value="ECO:0007669"/>
    <property type="project" value="UniProtKB-SubCell"/>
</dbReference>
<dbReference type="GO" id="GO:0030425">
    <property type="term" value="C:dendrite"/>
    <property type="evidence" value="ECO:0007669"/>
    <property type="project" value="UniProtKB-SubCell"/>
</dbReference>
<dbReference type="GO" id="GO:0030175">
    <property type="term" value="C:filopodium"/>
    <property type="evidence" value="ECO:0007669"/>
    <property type="project" value="UniProtKB-SubCell"/>
</dbReference>
<dbReference type="GO" id="GO:0005739">
    <property type="term" value="C:mitochondrion"/>
    <property type="evidence" value="ECO:0007669"/>
    <property type="project" value="Ensembl"/>
</dbReference>
<dbReference type="GO" id="GO:0005730">
    <property type="term" value="C:nucleolus"/>
    <property type="evidence" value="ECO:0000318"/>
    <property type="project" value="GO_Central"/>
</dbReference>
<dbReference type="GO" id="GO:0005654">
    <property type="term" value="C:nucleoplasm"/>
    <property type="evidence" value="ECO:0007669"/>
    <property type="project" value="Ensembl"/>
</dbReference>
<dbReference type="GO" id="GO:0032040">
    <property type="term" value="C:small-subunit processome"/>
    <property type="evidence" value="ECO:0000250"/>
    <property type="project" value="UniProtKB"/>
</dbReference>
<dbReference type="GO" id="GO:0000462">
    <property type="term" value="P:maturation of SSU-rRNA from tricistronic rRNA transcript (SSU-rRNA, 5.8S rRNA, LSU-rRNA)"/>
    <property type="evidence" value="ECO:0000318"/>
    <property type="project" value="GO_Central"/>
</dbReference>
<dbReference type="GO" id="GO:0006417">
    <property type="term" value="P:regulation of translation"/>
    <property type="evidence" value="ECO:0007669"/>
    <property type="project" value="UniProtKB-KW"/>
</dbReference>
<dbReference type="GO" id="GO:0042274">
    <property type="term" value="P:ribosomal small subunit biogenesis"/>
    <property type="evidence" value="ECO:0000250"/>
    <property type="project" value="UniProtKB"/>
</dbReference>
<dbReference type="InterPro" id="IPR007146">
    <property type="entry name" value="Sas10/Utp3/C1D"/>
</dbReference>
<dbReference type="PANTHER" id="PTHR13237:SF9">
    <property type="entry name" value="NEUROGUIDIN"/>
    <property type="match status" value="1"/>
</dbReference>
<dbReference type="PANTHER" id="PTHR13237">
    <property type="entry name" value="SOMETHING ABOUT SILENCING PROTEIN 10-RELATED"/>
    <property type="match status" value="1"/>
</dbReference>
<dbReference type="Pfam" id="PF04000">
    <property type="entry name" value="Sas10_Utp3"/>
    <property type="match status" value="1"/>
</dbReference>
<protein>
    <recommendedName>
        <fullName>Neuroguidin</fullName>
    </recommendedName>
    <alternativeName>
        <fullName>EIF4E-binding protein</fullName>
    </alternativeName>
</protein>
<sequence>MAAPEVLESDLPNAVALLKNLQEQVMAVTAQVQTLTKKVQAKAYPTEKGLSLLEVKDQLLLMYLMDLSHLILDKASGGSLQGHPAVLRLVEIRTVLEKLRPLDQKLKYQIDKLVKTAVTGSLSENDPLRFKPHPSNMMSKLSSEDEEEDEAEEGQSGASGKKSGKGTAKKYVPPRLVPVHYDETEAEREKKRLERAKRRALSSSVIRELKEQYSDAPEEIRDARHPHVTRQSQEDQHRINYEESMMVRLSVSKREKGRRKRANVMSSQLHSLTHFSDISALTGGTPHLDEDQNPTKKRKKIPKKGRKKKGFRRRR</sequence>
<gene>
    <name type="primary">NGDN</name>
</gene>
<proteinExistence type="evidence at transcript level"/>
<comment type="function">
    <text evidence="2 3">Part of the small subunit (SSU) processome, first precursor of the small eukaryotic ribosomal subunit. During the assembly of the SSU processome in the nucleolus, many ribosome biogenesis factors, an RNA chaperone and ribosomal proteins associate with the nascent pre-rRNA and work in concert to generate RNA folding, modifications, rearrangements and cleavage as well as targeted degradation of pre-ribosomal RNA by the RNA exosome. Its dissociation from the complex determines the transition from state pre-A1 to state pre-A1* (By similarity). Inhibits mRNA translation in a cytoplasmic polyadenylation element (CPE)-dependent manner (By similarity).</text>
</comment>
<comment type="subunit">
    <text evidence="2 3">Part of the small subunit (SSU) processome, composed of more than 70 proteins and the RNA chaperone small nucleolar RNA (snoRNA) U3 (By similarity). Interacts with CPEB1 and EIF4E (By similarity).</text>
</comment>
<comment type="subcellular location">
    <subcellularLocation>
        <location evidence="3">Nucleus</location>
    </subcellularLocation>
    <subcellularLocation>
        <location evidence="2">Nucleus</location>
        <location evidence="2">Nucleolus</location>
    </subcellularLocation>
    <subcellularLocation>
        <location evidence="2">Chromosome</location>
        <location evidence="2">Centromere</location>
    </subcellularLocation>
    <subcellularLocation>
        <location evidence="3">Cytoplasm</location>
    </subcellularLocation>
    <subcellularLocation>
        <location evidence="3">Cell projection</location>
        <location evidence="3">Axon</location>
    </subcellularLocation>
    <subcellularLocation>
        <location evidence="3">Cell projection</location>
        <location evidence="3">Dendrite</location>
    </subcellularLocation>
    <subcellularLocation>
        <location evidence="3">Cell projection</location>
        <location evidence="3">Filopodium</location>
    </subcellularLocation>
    <text evidence="3">Translocated from nucleolus to nuclear foci in response to UV damage (By similarity). Detected in axons, dendrites and filopodia. Colocalized with EIF4E in neurites (By similarity).</text>
</comment>
<comment type="similarity">
    <text evidence="6">Belongs to the SAS10 family.</text>
</comment>
<keyword id="KW-0007">Acetylation</keyword>
<keyword id="KW-0966">Cell projection</keyword>
<keyword id="KW-0137">Centromere</keyword>
<keyword id="KW-0158">Chromosome</keyword>
<keyword id="KW-0175">Coiled coil</keyword>
<keyword id="KW-0963">Cytoplasm</keyword>
<keyword id="KW-0539">Nucleus</keyword>
<keyword id="KW-0597">Phosphoprotein</keyword>
<keyword id="KW-1185">Reference proteome</keyword>
<keyword id="KW-0678">Repressor</keyword>
<keyword id="KW-0810">Translation regulation</keyword>